<dbReference type="EMBL" id="CP001598">
    <property type="protein sequence ID" value="ACQ46316.1"/>
    <property type="molecule type" value="Genomic_DNA"/>
</dbReference>
<dbReference type="RefSeq" id="WP_001180010.1">
    <property type="nucleotide sequence ID" value="NC_012659.1"/>
</dbReference>
<dbReference type="GeneID" id="45021215"/>
<dbReference type="KEGG" id="bai:BAA_1286"/>
<dbReference type="HOGENOM" id="CLU_142282_0_0_9"/>
<dbReference type="HAMAP" id="MF_01861">
    <property type="entry name" value="UPF0738"/>
    <property type="match status" value="1"/>
</dbReference>
<dbReference type="InterPro" id="IPR020908">
    <property type="entry name" value="UPF0738"/>
</dbReference>
<dbReference type="Pfam" id="PF19785">
    <property type="entry name" value="UPF0738"/>
    <property type="match status" value="1"/>
</dbReference>
<feature type="chain" id="PRO_1000188706" description="UPF0738 protein BAA_1286">
    <location>
        <begin position="1"/>
        <end position="119"/>
    </location>
</feature>
<comment type="similarity">
    <text evidence="1">Belongs to the UPF0738 family.</text>
</comment>
<sequence length="119" mass="13662">MQNKIQVKSVEKRENALIFCAENSEIEVKGLSARNHVLVDSDNLSFLYILENESSFIYVSIPHTCWEAMNNDVVMFVRVNDIEMELEGLKEEVEYLVENIEGNANYGEELVTAVEKVFL</sequence>
<proteinExistence type="inferred from homology"/>
<protein>
    <recommendedName>
        <fullName evidence="1">UPF0738 protein BAA_1286</fullName>
    </recommendedName>
</protein>
<organism>
    <name type="scientific">Bacillus anthracis (strain A0248)</name>
    <dbReference type="NCBI Taxonomy" id="592021"/>
    <lineage>
        <taxon>Bacteria</taxon>
        <taxon>Bacillati</taxon>
        <taxon>Bacillota</taxon>
        <taxon>Bacilli</taxon>
        <taxon>Bacillales</taxon>
        <taxon>Bacillaceae</taxon>
        <taxon>Bacillus</taxon>
        <taxon>Bacillus cereus group</taxon>
    </lineage>
</organism>
<name>Y1286_BACAA</name>
<evidence type="ECO:0000255" key="1">
    <source>
        <dbReference type="HAMAP-Rule" id="MF_01861"/>
    </source>
</evidence>
<gene>
    <name type="ordered locus">BAA_1286</name>
</gene>
<accession>C3P3Q0</accession>
<reference key="1">
    <citation type="submission" date="2009-04" db="EMBL/GenBank/DDBJ databases">
        <title>Genome sequence of Bacillus anthracis A0248.</title>
        <authorList>
            <person name="Dodson R.J."/>
            <person name="Munk A.C."/>
            <person name="Bruce D."/>
            <person name="Detter C."/>
            <person name="Tapia R."/>
            <person name="Sutton G."/>
            <person name="Sims D."/>
            <person name="Brettin T."/>
        </authorList>
    </citation>
    <scope>NUCLEOTIDE SEQUENCE [LARGE SCALE GENOMIC DNA]</scope>
    <source>
        <strain>A0248</strain>
    </source>
</reference>